<sequence>MAVKLNATKREDLTKSATKQIRLSGRVPAVVYGKAKDPKNVSVDSVDLVKTVRDEGRNAIISLQVENSSVDVMLHDYQIDPIKDELLHADFYVVNMSEEMDVNVAVRLDGETKGEKEGGVLQQPFYEILVRAKPNNIPEEIVIDVSDLDVGDSVSVADIKVDGNYEILEDPDTSVASVTPPTTEEDLDTDDVDENAEPELVGAENDSADEESENK</sequence>
<dbReference type="EMBL" id="BA000028">
    <property type="protein sequence ID" value="BAC12016.1"/>
    <property type="molecule type" value="Genomic_DNA"/>
</dbReference>
<dbReference type="RefSeq" id="WP_011064462.1">
    <property type="nucleotide sequence ID" value="NC_004193.1"/>
</dbReference>
<dbReference type="SMR" id="Q8EU33"/>
<dbReference type="STRING" id="221109.gene:10732222"/>
<dbReference type="KEGG" id="oih:OB0060"/>
<dbReference type="eggNOG" id="COG1825">
    <property type="taxonomic scope" value="Bacteria"/>
</dbReference>
<dbReference type="HOGENOM" id="CLU_075939_2_0_9"/>
<dbReference type="OrthoDB" id="9790002at2"/>
<dbReference type="PhylomeDB" id="Q8EU33"/>
<dbReference type="Proteomes" id="UP000000822">
    <property type="component" value="Chromosome"/>
</dbReference>
<dbReference type="GO" id="GO:0022625">
    <property type="term" value="C:cytosolic large ribosomal subunit"/>
    <property type="evidence" value="ECO:0007669"/>
    <property type="project" value="TreeGrafter"/>
</dbReference>
<dbReference type="GO" id="GO:0008097">
    <property type="term" value="F:5S rRNA binding"/>
    <property type="evidence" value="ECO:0007669"/>
    <property type="project" value="InterPro"/>
</dbReference>
<dbReference type="GO" id="GO:0003735">
    <property type="term" value="F:structural constituent of ribosome"/>
    <property type="evidence" value="ECO:0007669"/>
    <property type="project" value="InterPro"/>
</dbReference>
<dbReference type="GO" id="GO:0006412">
    <property type="term" value="P:translation"/>
    <property type="evidence" value="ECO:0007669"/>
    <property type="project" value="UniProtKB-UniRule"/>
</dbReference>
<dbReference type="CDD" id="cd00495">
    <property type="entry name" value="Ribosomal_L25_TL5_CTC"/>
    <property type="match status" value="1"/>
</dbReference>
<dbReference type="Gene3D" id="2.170.120.20">
    <property type="entry name" value="Ribosomal protein L25, beta domain"/>
    <property type="match status" value="1"/>
</dbReference>
<dbReference type="Gene3D" id="2.40.240.10">
    <property type="entry name" value="Ribosomal Protein L25, Chain P"/>
    <property type="match status" value="1"/>
</dbReference>
<dbReference type="HAMAP" id="MF_01334">
    <property type="entry name" value="Ribosomal_bL25_CTC"/>
    <property type="match status" value="1"/>
</dbReference>
<dbReference type="InterPro" id="IPR020056">
    <property type="entry name" value="Rbsml_bL25/Gln-tRNA_synth_N"/>
</dbReference>
<dbReference type="InterPro" id="IPR011035">
    <property type="entry name" value="Ribosomal_bL25/Gln-tRNA_synth"/>
</dbReference>
<dbReference type="InterPro" id="IPR020057">
    <property type="entry name" value="Ribosomal_bL25_b-dom"/>
</dbReference>
<dbReference type="InterPro" id="IPR037121">
    <property type="entry name" value="Ribosomal_bL25_C"/>
</dbReference>
<dbReference type="InterPro" id="IPR001021">
    <property type="entry name" value="Ribosomal_bL25_long"/>
</dbReference>
<dbReference type="InterPro" id="IPR029751">
    <property type="entry name" value="Ribosomal_L25_dom"/>
</dbReference>
<dbReference type="InterPro" id="IPR020930">
    <property type="entry name" value="Ribosomal_uL5_bac-type"/>
</dbReference>
<dbReference type="NCBIfam" id="TIGR00731">
    <property type="entry name" value="bL25_bact_ctc"/>
    <property type="match status" value="1"/>
</dbReference>
<dbReference type="NCBIfam" id="NF004133">
    <property type="entry name" value="PRK05618.2-4"/>
    <property type="match status" value="1"/>
</dbReference>
<dbReference type="PANTHER" id="PTHR33284">
    <property type="entry name" value="RIBOSOMAL PROTEIN L25/GLN-TRNA SYNTHETASE, ANTI-CODON-BINDING DOMAIN-CONTAINING PROTEIN"/>
    <property type="match status" value="1"/>
</dbReference>
<dbReference type="PANTHER" id="PTHR33284:SF1">
    <property type="entry name" value="RIBOSOMAL PROTEIN L25_GLN-TRNA SYNTHETASE, ANTI-CODON-BINDING DOMAIN-CONTAINING PROTEIN"/>
    <property type="match status" value="1"/>
</dbReference>
<dbReference type="Pfam" id="PF01386">
    <property type="entry name" value="Ribosomal_L25p"/>
    <property type="match status" value="1"/>
</dbReference>
<dbReference type="Pfam" id="PF14693">
    <property type="entry name" value="Ribosomal_TL5_C"/>
    <property type="match status" value="1"/>
</dbReference>
<dbReference type="SUPFAM" id="SSF50715">
    <property type="entry name" value="Ribosomal protein L25-like"/>
    <property type="match status" value="1"/>
</dbReference>
<keyword id="KW-1185">Reference proteome</keyword>
<keyword id="KW-0687">Ribonucleoprotein</keyword>
<keyword id="KW-0689">Ribosomal protein</keyword>
<keyword id="KW-0694">RNA-binding</keyword>
<keyword id="KW-0699">rRNA-binding</keyword>
<comment type="function">
    <text evidence="1">This is one of the proteins that binds to the 5S RNA in the ribosome where it forms part of the central protuberance.</text>
</comment>
<comment type="subunit">
    <text evidence="1">Part of the 50S ribosomal subunit; part of the 5S rRNA/L5/L18/L25 subcomplex. Contacts the 5S rRNA. Binds to the 5S rRNA independently of L5 and L18.</text>
</comment>
<comment type="similarity">
    <text evidence="1">Belongs to the bacterial ribosomal protein bL25 family. CTC subfamily.</text>
</comment>
<feature type="chain" id="PRO_0000181576" description="Large ribosomal subunit protein bL25">
    <location>
        <begin position="1"/>
        <end position="215"/>
    </location>
</feature>
<feature type="region of interest" description="Disordered" evidence="2">
    <location>
        <begin position="170"/>
        <end position="215"/>
    </location>
</feature>
<feature type="compositionally biased region" description="Acidic residues" evidence="2">
    <location>
        <begin position="183"/>
        <end position="197"/>
    </location>
</feature>
<feature type="compositionally biased region" description="Acidic residues" evidence="2">
    <location>
        <begin position="206"/>
        <end position="215"/>
    </location>
</feature>
<proteinExistence type="inferred from homology"/>
<evidence type="ECO:0000255" key="1">
    <source>
        <dbReference type="HAMAP-Rule" id="MF_01334"/>
    </source>
</evidence>
<evidence type="ECO:0000256" key="2">
    <source>
        <dbReference type="SAM" id="MobiDB-lite"/>
    </source>
</evidence>
<evidence type="ECO:0000305" key="3"/>
<accession>Q8EU33</accession>
<reference key="1">
    <citation type="journal article" date="2002" name="Nucleic Acids Res.">
        <title>Genome sequence of Oceanobacillus iheyensis isolated from the Iheya Ridge and its unexpected adaptive capabilities to extreme environments.</title>
        <authorList>
            <person name="Takami H."/>
            <person name="Takaki Y."/>
            <person name="Uchiyama I."/>
        </authorList>
    </citation>
    <scope>NUCLEOTIDE SEQUENCE [LARGE SCALE GENOMIC DNA]</scope>
    <source>
        <strain>DSM 14371 / CIP 107618 / JCM 11309 / KCTC 3954 / HTE831</strain>
    </source>
</reference>
<name>RL25_OCEIH</name>
<protein>
    <recommendedName>
        <fullName evidence="1">Large ribosomal subunit protein bL25</fullName>
    </recommendedName>
    <alternativeName>
        <fullName evidence="3">50S ribosomal protein L25</fullName>
    </alternativeName>
    <alternativeName>
        <fullName evidence="1">General stress protein CTC</fullName>
    </alternativeName>
</protein>
<gene>
    <name evidence="1" type="primary">rplY</name>
    <name evidence="1" type="synonym">ctc</name>
    <name type="ordered locus">OB0060</name>
</gene>
<organism>
    <name type="scientific">Oceanobacillus iheyensis (strain DSM 14371 / CIP 107618 / JCM 11309 / KCTC 3954 / HTE831)</name>
    <dbReference type="NCBI Taxonomy" id="221109"/>
    <lineage>
        <taxon>Bacteria</taxon>
        <taxon>Bacillati</taxon>
        <taxon>Bacillota</taxon>
        <taxon>Bacilli</taxon>
        <taxon>Bacillales</taxon>
        <taxon>Bacillaceae</taxon>
        <taxon>Oceanobacillus</taxon>
    </lineage>
</organism>